<protein>
    <recommendedName>
        <fullName evidence="1">Phosphomethylpyrimidine synthase</fullName>
        <ecNumber evidence="1">4.1.99.17</ecNumber>
    </recommendedName>
    <alternativeName>
        <fullName evidence="1">Hydroxymethylpyrimidine phosphate synthase</fullName>
        <shortName evidence="1">HMP-P synthase</shortName>
        <shortName evidence="1">HMP-phosphate synthase</shortName>
        <shortName evidence="1">HMPP synthase</shortName>
    </alternativeName>
    <alternativeName>
        <fullName evidence="1">Thiamine biosynthesis protein ThiC</fullName>
    </alternativeName>
</protein>
<sequence length="650" mass="73314">MSNTAKKSSRRETRAAASEYIYNLTGQPFPNSHKVYVEGTQNNIRVGMREITLSDTYIGGSDENPVYEPNEPLRVYDTSGPYTDPNFKLDVRQGLAKFREQWIESRGDTELLESVTSRFTQQRMADEGLDHLRFEHLPKIRRGKAGKNVTQMHYARQGIITPEMEYVAIRENMGRKKIHAELLAAQHKGESFGASIPDFITPEFVRDEIARGRAILPNNINHPETEPMIVGRNFLVKVNANIGNSSVSSSIEEEVEKMVWSTRWGADTVMDLSTGRYIHETREWVVRNSPVPIGTVPIYQALEKVNGVAEDLTWEIFRDTLIEQAEQGVDYFTIHAGVLLRYVPMTAKRVTGIVSRGGSIMAKWCLAHHKENFLYTHFEDICEILKQYDICFSLGDGLRPGSIADANDEAQFSELRTLGELTKLAWKHDVQVFIEGPGHVPMHMIKANMDEQLKHCDEAPFYTLGPLTTDIAPGYDHITSGIGAAQIAWYGCAMLCYVTPKEHLGLPNKEDVKEGLITYKIAAHAADLAKGHPGAQERDNALSKARFEFRWHDQFNIGLDPERAREYHDETLPQESGKVAHFCSMCGPKFCSMKISQEVREYAKDLEARGIDPANAADTITIKMIDVEAQMKAKSDEFKKTGSEIYHKAI</sequence>
<organism>
    <name type="scientific">Pseudoalteromonas translucida (strain TAC 125)</name>
    <dbReference type="NCBI Taxonomy" id="326442"/>
    <lineage>
        <taxon>Bacteria</taxon>
        <taxon>Pseudomonadati</taxon>
        <taxon>Pseudomonadota</taxon>
        <taxon>Gammaproteobacteria</taxon>
        <taxon>Alteromonadales</taxon>
        <taxon>Pseudoalteromonadaceae</taxon>
        <taxon>Pseudoalteromonas</taxon>
    </lineage>
</organism>
<evidence type="ECO:0000255" key="1">
    <source>
        <dbReference type="HAMAP-Rule" id="MF_00089"/>
    </source>
</evidence>
<feature type="chain" id="PRO_0000242286" description="Phosphomethylpyrimidine synthase">
    <location>
        <begin position="1"/>
        <end position="650"/>
    </location>
</feature>
<feature type="binding site" evidence="1">
    <location>
        <position position="241"/>
    </location>
    <ligand>
        <name>substrate</name>
    </ligand>
</feature>
<feature type="binding site" evidence="1">
    <location>
        <position position="270"/>
    </location>
    <ligand>
        <name>substrate</name>
    </ligand>
</feature>
<feature type="binding site" evidence="1">
    <location>
        <position position="299"/>
    </location>
    <ligand>
        <name>substrate</name>
    </ligand>
</feature>
<feature type="binding site" evidence="1">
    <location>
        <position position="335"/>
    </location>
    <ligand>
        <name>substrate</name>
    </ligand>
</feature>
<feature type="binding site" evidence="1">
    <location>
        <begin position="355"/>
        <end position="357"/>
    </location>
    <ligand>
        <name>substrate</name>
    </ligand>
</feature>
<feature type="binding site" evidence="1">
    <location>
        <begin position="396"/>
        <end position="399"/>
    </location>
    <ligand>
        <name>substrate</name>
    </ligand>
</feature>
<feature type="binding site" evidence="1">
    <location>
        <position position="435"/>
    </location>
    <ligand>
        <name>substrate</name>
    </ligand>
</feature>
<feature type="binding site" evidence="1">
    <location>
        <position position="439"/>
    </location>
    <ligand>
        <name>Zn(2+)</name>
        <dbReference type="ChEBI" id="CHEBI:29105"/>
    </ligand>
</feature>
<feature type="binding site" evidence="1">
    <location>
        <position position="462"/>
    </location>
    <ligand>
        <name>substrate</name>
    </ligand>
</feature>
<feature type="binding site" evidence="1">
    <location>
        <position position="503"/>
    </location>
    <ligand>
        <name>Zn(2+)</name>
        <dbReference type="ChEBI" id="CHEBI:29105"/>
    </ligand>
</feature>
<feature type="binding site" evidence="1">
    <location>
        <position position="583"/>
    </location>
    <ligand>
        <name>[4Fe-4S] cluster</name>
        <dbReference type="ChEBI" id="CHEBI:49883"/>
        <note>4Fe-4S-S-AdoMet</note>
    </ligand>
</feature>
<feature type="binding site" evidence="1">
    <location>
        <position position="586"/>
    </location>
    <ligand>
        <name>[4Fe-4S] cluster</name>
        <dbReference type="ChEBI" id="CHEBI:49883"/>
        <note>4Fe-4S-S-AdoMet</note>
    </ligand>
</feature>
<feature type="binding site" evidence="1">
    <location>
        <position position="591"/>
    </location>
    <ligand>
        <name>[4Fe-4S] cluster</name>
        <dbReference type="ChEBI" id="CHEBI:49883"/>
        <note>4Fe-4S-S-AdoMet</note>
    </ligand>
</feature>
<name>THIC_PSET1</name>
<reference key="1">
    <citation type="journal article" date="2005" name="Genome Res.">
        <title>Coping with cold: the genome of the versatile marine Antarctica bacterium Pseudoalteromonas haloplanktis TAC125.</title>
        <authorList>
            <person name="Medigue C."/>
            <person name="Krin E."/>
            <person name="Pascal G."/>
            <person name="Barbe V."/>
            <person name="Bernsel A."/>
            <person name="Bertin P.N."/>
            <person name="Cheung F."/>
            <person name="Cruveiller S."/>
            <person name="D'Amico S."/>
            <person name="Duilio A."/>
            <person name="Fang G."/>
            <person name="Feller G."/>
            <person name="Ho C."/>
            <person name="Mangenot S."/>
            <person name="Marino G."/>
            <person name="Nilsson J."/>
            <person name="Parrilli E."/>
            <person name="Rocha E.P.C."/>
            <person name="Rouy Z."/>
            <person name="Sekowska A."/>
            <person name="Tutino M.L."/>
            <person name="Vallenet D."/>
            <person name="von Heijne G."/>
            <person name="Danchin A."/>
        </authorList>
    </citation>
    <scope>NUCLEOTIDE SEQUENCE [LARGE SCALE GENOMIC DNA]</scope>
    <source>
        <strain>TAC 125</strain>
    </source>
</reference>
<keyword id="KW-0004">4Fe-4S</keyword>
<keyword id="KW-0408">Iron</keyword>
<keyword id="KW-0411">Iron-sulfur</keyword>
<keyword id="KW-0456">Lyase</keyword>
<keyword id="KW-0479">Metal-binding</keyword>
<keyword id="KW-1185">Reference proteome</keyword>
<keyword id="KW-0949">S-adenosyl-L-methionine</keyword>
<keyword id="KW-0784">Thiamine biosynthesis</keyword>
<keyword id="KW-0862">Zinc</keyword>
<proteinExistence type="inferred from homology"/>
<gene>
    <name evidence="1" type="primary">thiC</name>
    <name type="ordered locus">PSHAa0480</name>
</gene>
<comment type="function">
    <text evidence="1">Catalyzes the synthesis of the hydroxymethylpyrimidine phosphate (HMP-P) moiety of thiamine from aminoimidazole ribotide (AIR) in a radical S-adenosyl-L-methionine (SAM)-dependent reaction.</text>
</comment>
<comment type="catalytic activity">
    <reaction evidence="1">
        <text>5-amino-1-(5-phospho-beta-D-ribosyl)imidazole + S-adenosyl-L-methionine = 4-amino-2-methyl-5-(phosphooxymethyl)pyrimidine + CO + 5'-deoxyadenosine + formate + L-methionine + 3 H(+)</text>
        <dbReference type="Rhea" id="RHEA:24840"/>
        <dbReference type="ChEBI" id="CHEBI:15378"/>
        <dbReference type="ChEBI" id="CHEBI:15740"/>
        <dbReference type="ChEBI" id="CHEBI:17245"/>
        <dbReference type="ChEBI" id="CHEBI:17319"/>
        <dbReference type="ChEBI" id="CHEBI:57844"/>
        <dbReference type="ChEBI" id="CHEBI:58354"/>
        <dbReference type="ChEBI" id="CHEBI:59789"/>
        <dbReference type="ChEBI" id="CHEBI:137981"/>
        <dbReference type="EC" id="4.1.99.17"/>
    </reaction>
</comment>
<comment type="cofactor">
    <cofactor evidence="1">
        <name>[4Fe-4S] cluster</name>
        <dbReference type="ChEBI" id="CHEBI:49883"/>
    </cofactor>
    <text evidence="1">Binds 1 [4Fe-4S] cluster per subunit. The cluster is coordinated with 3 cysteines and an exchangeable S-adenosyl-L-methionine.</text>
</comment>
<comment type="pathway">
    <text evidence="1">Cofactor biosynthesis; thiamine diphosphate biosynthesis.</text>
</comment>
<comment type="subunit">
    <text evidence="1">Homodimer.</text>
</comment>
<comment type="similarity">
    <text evidence="1">Belongs to the ThiC family.</text>
</comment>
<dbReference type="EC" id="4.1.99.17" evidence="1"/>
<dbReference type="EMBL" id="CR954246">
    <property type="protein sequence ID" value="CAI85576.1"/>
    <property type="molecule type" value="Genomic_DNA"/>
</dbReference>
<dbReference type="SMR" id="Q3IFN9"/>
<dbReference type="STRING" id="326442.PSHAa0480"/>
<dbReference type="KEGG" id="pha:PSHAa0480"/>
<dbReference type="PATRIC" id="fig|326442.8.peg.456"/>
<dbReference type="eggNOG" id="COG0422">
    <property type="taxonomic scope" value="Bacteria"/>
</dbReference>
<dbReference type="HOGENOM" id="CLU_013181_2_1_6"/>
<dbReference type="BioCyc" id="PHAL326442:PSHA_RS02325-MONOMER"/>
<dbReference type="UniPathway" id="UPA00060"/>
<dbReference type="Proteomes" id="UP000006843">
    <property type="component" value="Chromosome I"/>
</dbReference>
<dbReference type="GO" id="GO:0005829">
    <property type="term" value="C:cytosol"/>
    <property type="evidence" value="ECO:0007669"/>
    <property type="project" value="TreeGrafter"/>
</dbReference>
<dbReference type="GO" id="GO:0051539">
    <property type="term" value="F:4 iron, 4 sulfur cluster binding"/>
    <property type="evidence" value="ECO:0007669"/>
    <property type="project" value="UniProtKB-KW"/>
</dbReference>
<dbReference type="GO" id="GO:0016830">
    <property type="term" value="F:carbon-carbon lyase activity"/>
    <property type="evidence" value="ECO:0007669"/>
    <property type="project" value="InterPro"/>
</dbReference>
<dbReference type="GO" id="GO:0008270">
    <property type="term" value="F:zinc ion binding"/>
    <property type="evidence" value="ECO:0007669"/>
    <property type="project" value="UniProtKB-UniRule"/>
</dbReference>
<dbReference type="GO" id="GO:0009228">
    <property type="term" value="P:thiamine biosynthetic process"/>
    <property type="evidence" value="ECO:0007669"/>
    <property type="project" value="UniProtKB-KW"/>
</dbReference>
<dbReference type="GO" id="GO:0009229">
    <property type="term" value="P:thiamine diphosphate biosynthetic process"/>
    <property type="evidence" value="ECO:0007669"/>
    <property type="project" value="UniProtKB-UniRule"/>
</dbReference>
<dbReference type="FunFam" id="3.20.20.540:FF:000001">
    <property type="entry name" value="Phosphomethylpyrimidine synthase"/>
    <property type="match status" value="1"/>
</dbReference>
<dbReference type="Gene3D" id="6.10.250.620">
    <property type="match status" value="1"/>
</dbReference>
<dbReference type="Gene3D" id="3.20.20.540">
    <property type="entry name" value="Radical SAM ThiC family, central domain"/>
    <property type="match status" value="1"/>
</dbReference>
<dbReference type="HAMAP" id="MF_00089">
    <property type="entry name" value="ThiC"/>
    <property type="match status" value="1"/>
</dbReference>
<dbReference type="InterPro" id="IPR037509">
    <property type="entry name" value="ThiC"/>
</dbReference>
<dbReference type="InterPro" id="IPR025747">
    <property type="entry name" value="ThiC-associated_dom"/>
</dbReference>
<dbReference type="InterPro" id="IPR038521">
    <property type="entry name" value="ThiC/Bza_core_dom"/>
</dbReference>
<dbReference type="InterPro" id="IPR002817">
    <property type="entry name" value="ThiC/BzaA/B"/>
</dbReference>
<dbReference type="NCBIfam" id="NF006763">
    <property type="entry name" value="PRK09284.1"/>
    <property type="match status" value="1"/>
</dbReference>
<dbReference type="NCBIfam" id="NF009895">
    <property type="entry name" value="PRK13352.1"/>
    <property type="match status" value="1"/>
</dbReference>
<dbReference type="NCBIfam" id="TIGR00190">
    <property type="entry name" value="thiC"/>
    <property type="match status" value="1"/>
</dbReference>
<dbReference type="PANTHER" id="PTHR30557:SF1">
    <property type="entry name" value="PHOSPHOMETHYLPYRIMIDINE SYNTHASE, CHLOROPLASTIC"/>
    <property type="match status" value="1"/>
</dbReference>
<dbReference type="PANTHER" id="PTHR30557">
    <property type="entry name" value="THIAMINE BIOSYNTHESIS PROTEIN THIC"/>
    <property type="match status" value="1"/>
</dbReference>
<dbReference type="Pfam" id="PF13667">
    <property type="entry name" value="ThiC-associated"/>
    <property type="match status" value="1"/>
</dbReference>
<dbReference type="Pfam" id="PF01964">
    <property type="entry name" value="ThiC_Rad_SAM"/>
    <property type="match status" value="1"/>
</dbReference>
<dbReference type="SFLD" id="SFLDF00407">
    <property type="entry name" value="phosphomethylpyrimidine_syntha"/>
    <property type="match status" value="1"/>
</dbReference>
<dbReference type="SFLD" id="SFLDG01114">
    <property type="entry name" value="phosphomethylpyrimidine_syntha"/>
    <property type="match status" value="1"/>
</dbReference>
<dbReference type="SFLD" id="SFLDS00113">
    <property type="entry name" value="Radical_SAM_Phosphomethylpyrim"/>
    <property type="match status" value="1"/>
</dbReference>
<accession>Q3IFN9</accession>